<gene>
    <name evidence="9" type="primary">dyf-2</name>
    <name evidence="9" type="ORF">ZK520.3</name>
</gene>
<reference evidence="7" key="1">
    <citation type="journal article" date="2006" name="Mol. Biol. Cell">
        <title>Caenorhabditis elegans DYF-2, an orthologue of human WDR19, is a component of the intraflagellar transport machinery in sensory cilia.</title>
        <authorList>
            <person name="Efimenko E."/>
            <person name="Blacque O.E."/>
            <person name="Ou G."/>
            <person name="Haycraft C.J."/>
            <person name="Yoder B.K."/>
            <person name="Scholey J.M."/>
            <person name="Leroux M.R."/>
            <person name="Swoboda P."/>
        </authorList>
    </citation>
    <scope>NUCLEOTIDE SEQUENCE [MRNA] (ISOFORM A)</scope>
    <scope>FUNCTION</scope>
    <scope>SUBCELLULAR LOCATION</scope>
    <scope>TISSUE SPECIFICITY</scope>
    <scope>DISRUPTION PHENOTYPE</scope>
</reference>
<reference evidence="8" key="2">
    <citation type="journal article" date="1998" name="Science">
        <title>Genome sequence of the nematode C. elegans: a platform for investigating biology.</title>
        <authorList>
            <consortium name="The C. elegans sequencing consortium"/>
        </authorList>
    </citation>
    <scope>NUCLEOTIDE SEQUENCE [LARGE SCALE GENOMIC DNA]</scope>
    <source>
        <strain evidence="8">Bristol N2</strain>
    </source>
</reference>
<reference evidence="6" key="3">
    <citation type="journal article" date="2012" name="Nat. Cell Biol.">
        <title>The BBSome controls IFT assembly and turnaround in cilia.</title>
        <authorList>
            <person name="Wei Q."/>
            <person name="Zhang Y."/>
            <person name="Li Y."/>
            <person name="Zhang Q."/>
            <person name="Ling K."/>
            <person name="Hu J."/>
        </authorList>
    </citation>
    <scope>FUNCTION</scope>
    <scope>SUBCELLULAR LOCATION</scope>
    <scope>MUTAGENESIS OF GLY-361</scope>
</reference>
<reference key="4">
    <citation type="journal article" date="2017" name="Curr. Biol.">
        <title>Dynein-driven retrograde intraflagellar transport is triphasic in C. elegans sensory cilia.</title>
        <authorList>
            <person name="Yi P."/>
            <person name="Li W.J."/>
            <person name="Dong M.Q."/>
            <person name="Ou G."/>
        </authorList>
    </citation>
    <scope>FUNCTION</scope>
    <scope>IDENTIFICATION IN IFT COMPLEX A</scope>
    <scope>IDENTIFICATION BY MASS SPECTROMETRY</scope>
</reference>
<feature type="chain" id="PRO_0000437075" description="WD repeat-containing protein dyf-2" evidence="6">
    <location>
        <begin position="1"/>
        <end position="1383"/>
    </location>
</feature>
<feature type="repeat" description="WD 1" evidence="2">
    <location>
        <begin position="32"/>
        <end position="71"/>
    </location>
</feature>
<feature type="repeat" description="WD 2" evidence="2">
    <location>
        <begin position="72"/>
        <end position="112"/>
    </location>
</feature>
<feature type="repeat" description="WD 3" evidence="2">
    <location>
        <begin position="118"/>
        <end position="157"/>
    </location>
</feature>
<feature type="repeat" description="WD 4" evidence="2">
    <location>
        <begin position="160"/>
        <end position="198"/>
    </location>
</feature>
<feature type="repeat" description="WD 5" evidence="2">
    <location>
        <begin position="337"/>
        <end position="376"/>
    </location>
</feature>
<feature type="repeat" description="TPR 1" evidence="2">
    <location>
        <begin position="756"/>
        <end position="789"/>
    </location>
</feature>
<feature type="repeat" description="TPR 2" evidence="2">
    <location>
        <begin position="810"/>
        <end position="847"/>
    </location>
</feature>
<feature type="repeat" description="TPR 3" evidence="2">
    <location>
        <begin position="885"/>
        <end position="918"/>
    </location>
</feature>
<feature type="repeat" description="TPR 4" evidence="2">
    <location>
        <begin position="940"/>
        <end position="973"/>
    </location>
</feature>
<feature type="repeat" description="TPR 5" evidence="2">
    <location>
        <begin position="996"/>
        <end position="1029"/>
    </location>
</feature>
<feature type="repeat" description="TPR 6" evidence="2">
    <location>
        <begin position="1031"/>
        <end position="1053"/>
    </location>
</feature>
<feature type="repeat" description="TPR 7" evidence="2">
    <location>
        <begin position="1064"/>
        <end position="1097"/>
    </location>
</feature>
<feature type="splice variant" id="VSP_058484" description="In isoform b." evidence="6">
    <location>
        <begin position="1"/>
        <end position="807"/>
    </location>
</feature>
<feature type="mutagenesis site" description="In jhu616; the mutated protein displays abnormal accumulation within the cilia. There is also impaired retrograde transport of IFT complex B proteins such as osm-6 along the ciliary axoneme." evidence="4">
    <original>G</original>
    <variation>R</variation>
    <location>
        <position position="361"/>
    </location>
</feature>
<organism evidence="7">
    <name type="scientific">Caenorhabditis elegans</name>
    <dbReference type="NCBI Taxonomy" id="6239"/>
    <lineage>
        <taxon>Eukaryota</taxon>
        <taxon>Metazoa</taxon>
        <taxon>Ecdysozoa</taxon>
        <taxon>Nematoda</taxon>
        <taxon>Chromadorea</taxon>
        <taxon>Rhabditida</taxon>
        <taxon>Rhabditina</taxon>
        <taxon>Rhabditomorpha</taxon>
        <taxon>Rhabditoidea</taxon>
        <taxon>Rhabditidae</taxon>
        <taxon>Peloderinae</taxon>
        <taxon>Caenorhabditis</taxon>
    </lineage>
</organism>
<protein>
    <recommendedName>
        <fullName evidence="1">WD repeat-containing protein dyf-2</fullName>
    </recommendedName>
    <alternativeName>
        <fullName evidence="9">Abnormal dye filling protein 2</fullName>
    </alternativeName>
</protein>
<dbReference type="EMBL" id="DQ314286">
    <property type="protein sequence ID" value="ABC42046.1"/>
    <property type="molecule type" value="mRNA"/>
</dbReference>
<dbReference type="EMBL" id="BX284603">
    <property type="protein sequence ID" value="CAL49447.1"/>
    <property type="molecule type" value="Genomic_DNA"/>
</dbReference>
<dbReference type="EMBL" id="BX284603">
    <property type="protein sequence ID" value="CAL49448.1"/>
    <property type="molecule type" value="Genomic_DNA"/>
</dbReference>
<dbReference type="RefSeq" id="NP_001076655.1">
    <property type="nucleotide sequence ID" value="NM_001083186.1"/>
</dbReference>
<dbReference type="RefSeq" id="NP_001076656.1">
    <property type="nucleotide sequence ID" value="NM_001083187.2"/>
</dbReference>
<dbReference type="SMR" id="G5ECZ4"/>
<dbReference type="ComplexPortal" id="CPX-1289">
    <property type="entry name" value="Intraflagellar transport complex A"/>
</dbReference>
<dbReference type="DIP" id="DIP-61858N"/>
<dbReference type="FunCoup" id="G5ECZ4">
    <property type="interactions" value="1502"/>
</dbReference>
<dbReference type="IntAct" id="G5ECZ4">
    <property type="interactions" value="4"/>
</dbReference>
<dbReference type="STRING" id="6239.ZK520.3a.1"/>
<dbReference type="TCDB" id="3.A.33.1.2">
    <property type="family name" value="the bbsome complex (bbsome) family"/>
</dbReference>
<dbReference type="PaxDb" id="6239-ZK520.3a"/>
<dbReference type="EnsemblMetazoa" id="ZK520.3a.1">
    <molecule id="G5ECZ4-1"/>
    <property type="protein sequence ID" value="ZK520.3a.1"/>
    <property type="gene ID" value="WBGene00001118"/>
</dbReference>
<dbReference type="EnsemblMetazoa" id="ZK520.3b.1">
    <molecule id="G5ECZ4-2"/>
    <property type="protein sequence ID" value="ZK520.3b.1"/>
    <property type="gene ID" value="WBGene00001118"/>
</dbReference>
<dbReference type="WormBase" id="ZK520.3a">
    <molecule id="G5ECZ4-1"/>
    <property type="protein sequence ID" value="CE40489"/>
    <property type="gene ID" value="WBGene00001118"/>
    <property type="gene designation" value="dyf-2"/>
</dbReference>
<dbReference type="WormBase" id="ZK520.3b">
    <molecule id="G5ECZ4-2"/>
    <property type="protein sequence ID" value="CE40490"/>
    <property type="gene ID" value="WBGene00001118"/>
    <property type="gene designation" value="dyf-2"/>
</dbReference>
<dbReference type="eggNOG" id="KOG2247">
    <property type="taxonomic scope" value="Eukaryota"/>
</dbReference>
<dbReference type="GeneTree" id="ENSGT00590000083165"/>
<dbReference type="HOGENOM" id="CLU_003002_2_0_1"/>
<dbReference type="InParanoid" id="G5ECZ4"/>
<dbReference type="OMA" id="NDMLTHT"/>
<dbReference type="PhylomeDB" id="G5ECZ4"/>
<dbReference type="Reactome" id="R-CEL-5610787">
    <property type="pathway name" value="Hedgehog 'off' state"/>
</dbReference>
<dbReference type="Reactome" id="R-CEL-5620924">
    <property type="pathway name" value="Intraflagellar transport"/>
</dbReference>
<dbReference type="PRO" id="PR:G5ECZ4"/>
<dbReference type="Proteomes" id="UP000001940">
    <property type="component" value="Chromosome III"/>
</dbReference>
<dbReference type="Bgee" id="WBGene00001118">
    <property type="expression patterns" value="Expressed in pharyngeal muscle cell (C elegans) and 3 other cell types or tissues"/>
</dbReference>
<dbReference type="GO" id="GO:0005929">
    <property type="term" value="C:cilium"/>
    <property type="evidence" value="ECO:0000318"/>
    <property type="project" value="GO_Central"/>
</dbReference>
<dbReference type="GO" id="GO:0030991">
    <property type="term" value="C:intraciliary transport particle A"/>
    <property type="evidence" value="ECO:0000318"/>
    <property type="project" value="GO_Central"/>
</dbReference>
<dbReference type="GO" id="GO:0030992">
    <property type="term" value="C:intraciliary transport particle B"/>
    <property type="evidence" value="ECO:0000314"/>
    <property type="project" value="WormBase"/>
</dbReference>
<dbReference type="GO" id="GO:0097730">
    <property type="term" value="C:non-motile cilium"/>
    <property type="evidence" value="ECO:0000314"/>
    <property type="project" value="WormBase"/>
</dbReference>
<dbReference type="GO" id="GO:0007635">
    <property type="term" value="P:chemosensory behavior"/>
    <property type="evidence" value="ECO:0000315"/>
    <property type="project" value="WormBase"/>
</dbReference>
<dbReference type="GO" id="GO:0006935">
    <property type="term" value="P:chemotaxis"/>
    <property type="evidence" value="ECO:0000315"/>
    <property type="project" value="WormBase"/>
</dbReference>
<dbReference type="GO" id="GO:0060271">
    <property type="term" value="P:cilium assembly"/>
    <property type="evidence" value="ECO:0000315"/>
    <property type="project" value="MGI"/>
</dbReference>
<dbReference type="GO" id="GO:0035721">
    <property type="term" value="P:intraciliary retrograde transport"/>
    <property type="evidence" value="ECO:0000315"/>
    <property type="project" value="MGI"/>
</dbReference>
<dbReference type="GO" id="GO:0042073">
    <property type="term" value="P:intraciliary transport"/>
    <property type="evidence" value="ECO:0000314"/>
    <property type="project" value="WormBase"/>
</dbReference>
<dbReference type="GO" id="GO:1905515">
    <property type="term" value="P:non-motile cilium assembly"/>
    <property type="evidence" value="ECO:0000315"/>
    <property type="project" value="WormBase"/>
</dbReference>
<dbReference type="GO" id="GO:0042048">
    <property type="term" value="P:olfactory behavior"/>
    <property type="evidence" value="ECO:0000315"/>
    <property type="project" value="WormBase"/>
</dbReference>
<dbReference type="GO" id="GO:0008104">
    <property type="term" value="P:protein localization"/>
    <property type="evidence" value="ECO:0000315"/>
    <property type="project" value="WormBase"/>
</dbReference>
<dbReference type="GO" id="GO:0015031">
    <property type="term" value="P:protein transport"/>
    <property type="evidence" value="ECO:0007669"/>
    <property type="project" value="UniProtKB-KW"/>
</dbReference>
<dbReference type="FunFam" id="1.25.40.470:FF:000009">
    <property type="entry name" value="WD repeat-containing protein 19 isoform X1"/>
    <property type="match status" value="1"/>
</dbReference>
<dbReference type="FunFam" id="1.25.40.470:FF:000049">
    <property type="entry name" value="WD repeat-containing protein dyf-2"/>
    <property type="match status" value="1"/>
</dbReference>
<dbReference type="FunFam" id="2.130.10.10:FF:003371">
    <property type="entry name" value="WD repeat-containing protein dyf-2"/>
    <property type="match status" value="1"/>
</dbReference>
<dbReference type="Gene3D" id="1.25.40.470">
    <property type="match status" value="2"/>
</dbReference>
<dbReference type="Gene3D" id="2.130.10.10">
    <property type="entry name" value="YVTN repeat-like/Quinoprotein amine dehydrogenase"/>
    <property type="match status" value="2"/>
</dbReference>
<dbReference type="InterPro" id="IPR011990">
    <property type="entry name" value="TPR-like_helical_dom_sf"/>
</dbReference>
<dbReference type="InterPro" id="IPR056168">
    <property type="entry name" value="TPR_IF140/IFT172/WDR19"/>
</dbReference>
<dbReference type="InterPro" id="IPR056157">
    <property type="entry name" value="TPR_IFT80_172_dom"/>
</dbReference>
<dbReference type="InterPro" id="IPR015943">
    <property type="entry name" value="WD40/YVTN_repeat-like_dom_sf"/>
</dbReference>
<dbReference type="InterPro" id="IPR036322">
    <property type="entry name" value="WD40_repeat_dom_sf"/>
</dbReference>
<dbReference type="InterPro" id="IPR001680">
    <property type="entry name" value="WD40_rpt"/>
</dbReference>
<dbReference type="InterPro" id="IPR040379">
    <property type="entry name" value="WDR19/dyf-2"/>
</dbReference>
<dbReference type="InterPro" id="IPR039468">
    <property type="entry name" value="WDR19_WD40_rpt"/>
</dbReference>
<dbReference type="PANTHER" id="PTHR14920">
    <property type="entry name" value="OSMOTIC AVOIDANCE ABNORMAL PROTEIN 1/WD REPEAT MEMBRANE PROTEIN"/>
    <property type="match status" value="1"/>
</dbReference>
<dbReference type="PANTHER" id="PTHR14920:SF0">
    <property type="entry name" value="WD REPEAT DOMAIN 19"/>
    <property type="match status" value="1"/>
</dbReference>
<dbReference type="Pfam" id="PF23389">
    <property type="entry name" value="Beta-prop_WDR19_1st"/>
    <property type="match status" value="1"/>
</dbReference>
<dbReference type="Pfam" id="PF15911">
    <property type="entry name" value="Beta-prop_WDR19_2nd"/>
    <property type="match status" value="1"/>
</dbReference>
<dbReference type="Pfam" id="PF24762">
    <property type="entry name" value="TPR_IF140-IFT172"/>
    <property type="match status" value="1"/>
</dbReference>
<dbReference type="Pfam" id="PF23387">
    <property type="entry name" value="TPR_IFT80_172"/>
    <property type="match status" value="1"/>
</dbReference>
<dbReference type="SMART" id="SM00320">
    <property type="entry name" value="WD40"/>
    <property type="match status" value="7"/>
</dbReference>
<dbReference type="SUPFAM" id="SSF48452">
    <property type="entry name" value="TPR-like"/>
    <property type="match status" value="1"/>
</dbReference>
<dbReference type="SUPFAM" id="SSF50978">
    <property type="entry name" value="WD40 repeat-like"/>
    <property type="match status" value="2"/>
</dbReference>
<dbReference type="PROSITE" id="PS50294">
    <property type="entry name" value="WD_REPEATS_REGION"/>
    <property type="match status" value="1"/>
</dbReference>
<sequence>MSLKVIPCTLTKNQEVFKCVSAQLQYRRGEEEHGSGPIIHRWRPNGHTVAVACANNTVIYYDKKGNVIDALNPTGKLIDIAWDKEGDVLAIAVANTGTIYLWDVNSRNTDTVESGATSSKELPTCLAWSPSTPTLVIGNNAGNIVVYNHRTSRRIAVMGKHQRSVTQITVTPEDYVISCSDDNTLSVTTLEGTTVSTTTTNGEPTNMDYGSVNGKGGSGVTMVSVVIGKKILMLAHYNALDEPVNLQFQEKYGNIHSYRWFNDGYILIGFDRGYIISISAHNNEIGSELVSFLEYRGYLASIAVSTSFNKLLTIGDNMVKVRDLDELTTVTMLTEIETEKNLSEIEVTEDGQLVAVSSQSGVLSIFVTKMPTLAASYNNSICYLTNLTQVTVVAEVEKKGSSTLELNIEPTVMGLGPLNLAVANNNTVFFYDYHTPAQMQAAQQLQSTQSAAEKPTIVAAEPINRVEYLSTVTNIQLNYMYAAVNFGSRLRLHRIRNSEDNVSIEFPEANRNATLYSYALTENFLIFTTSNNYIVYFSLSEWAIVSEYRHVVPVRSIFPHPTNVVCCCFDDRLEAMIYSAVDDEVFRLPSVGSSAHYKGAIWETFTIDKNTFAVFDSQNIYVFLLSKQHIQGESVIYVSATRLPHAYVPLSLNKGIVTCLMSNGKLSSVLLDSHKTESVISDKSETVIDDILTRSLLMHRWSTAWKICIHSNDGSHWNQFAMAALLDSDVGMAIKIFREIGDAAMVTALELIETIEEKNLLHAQIYTILSRYDDAEQLYLESSRPMEALNMRRDLLEWPKALVLAETMNPKEIPYLSKEYAQELELTGDHANSLANYEKGVMENPQNLPELQEHNEICQSGIARMAIKTGDLRRGVQLAKQLEGRVVKRDCAIILEQMKQYTEAAQLYEVGLFYDRAAAVCLKANAWAKVGELLDHVKSPKIHIQYGKIMEKEKKYKVAVKCYETGRDYDNQVRLLLDPLNDPDEAVRVVRESRSIEGAKLVAKFFVKLGDYNSAIQFLVMSQCVQEAFELAEKNNAVREYAKAIEQHGNISQALELAEYYNRVNDMFMAAKFYTQAGQYNNAINLLFKNGDDENCVALAVDCGIKSKDKTLNNKLVKFLLGEDGNVKDPAQLFRLYVGLGRTKDAAQTAVVVAQIHQAKGNYRIARDLLFQMHQQLREKMMRIPLDMNKSLMAIHSYIIVKALINRKETLLAARLLIRTCGEIQRFPTHVVPILTSSVVICTQANLKKSAHKFAAQLMTPEYRPKIHEKYKKKIEDIVRKGGNQKDLVEENTPCPICDDLMPAYAMSCDNCKSLVPYCILTGRHIVASDFSRCPHCEMPGFYSEFRKLSILNENCYMCGGDLKGAIPEDAKAYLEKMEQDYK</sequence>
<comment type="function">
    <text evidence="3 4 5">Component of the IFT complex A (IFT-A), a complex required for retrograde ciliary transport (PubMed:28479320). Moves along the ciliary axoneme and is involved in the assembly, localization and the movement of other intraflagellar transport (IFT) proteins along the cilia axoneme (PubMed:16957054, PubMed:22922713). May also associate with the BBSome complex in order to mediate ciliary transport (PubMed:22922713). Regulates cilia biogenesis, morphology and sensitivity to environmental cues (PubMed:16957054, PubMed:22922713).</text>
</comment>
<comment type="subunit">
    <text evidence="5">Component of the IFT complex A (IFT-A) composed of at least che-11, daf-10, dyf-2, ift-139, ift-43 and ifta-1.</text>
</comment>
<comment type="subcellular location">
    <subcellularLocation>
        <location evidence="3 4">Cell projection</location>
        <location evidence="3 4">Cilium</location>
    </subcellularLocation>
</comment>
<comment type="alternative products">
    <event type="alternative splicing"/>
    <isoform>
        <id>G5ECZ4-1</id>
        <name evidence="9">a</name>
        <sequence type="displayed"/>
    </isoform>
    <isoform>
        <id>G5ECZ4-2</id>
        <name evidence="10">b</name>
        <sequence type="described" ref="VSP_058484"/>
    </isoform>
</comment>
<comment type="tissue specificity">
    <text evidence="3">Expressed in ciliated sensory neurons.</text>
</comment>
<comment type="disruption phenotype">
    <text evidence="3">Defects in cilium morphology and mislocalization of intraflagellar transport proteins. Specifically, phasmid cilia are shorter compared to wild-type, ciliary IFT A complex proteins such as che-11, osm-5 are mislocalized, and the transport and accumulation of the ciliary IFT B complex protein che-13 is impaired. Mutants also display a strong osmosensory (osm) phenotype with an aversion to high osmolarity, and they exhibit impaired chemotaxis in response to volatile odorants such as pyrazine and iso-amyl alcohol.</text>
</comment>
<accession>G5ECZ4</accession>
<accession>G5EDS4</accession>
<evidence type="ECO:0000250" key="1">
    <source>
        <dbReference type="UniProtKB" id="Q8NEZ3"/>
    </source>
</evidence>
<evidence type="ECO:0000255" key="2"/>
<evidence type="ECO:0000269" key="3">
    <source>
    </source>
</evidence>
<evidence type="ECO:0000269" key="4">
    <source>
    </source>
</evidence>
<evidence type="ECO:0000269" key="5">
    <source>
    </source>
</evidence>
<evidence type="ECO:0000305" key="6"/>
<evidence type="ECO:0000312" key="7">
    <source>
        <dbReference type="EMBL" id="ABC42046.1"/>
    </source>
</evidence>
<evidence type="ECO:0000312" key="8">
    <source>
        <dbReference type="Proteomes" id="UP000001940"/>
    </source>
</evidence>
<evidence type="ECO:0000312" key="9">
    <source>
        <dbReference type="WormBase" id="ZK520.3a"/>
    </source>
</evidence>
<evidence type="ECO:0000312" key="10">
    <source>
        <dbReference type="WormBase" id="ZK520.3b"/>
    </source>
</evidence>
<proteinExistence type="evidence at protein level"/>
<name>DYF2_CAEEL</name>
<keyword id="KW-0025">Alternative splicing</keyword>
<keyword id="KW-0966">Cell projection</keyword>
<keyword id="KW-0969">Cilium</keyword>
<keyword id="KW-0970">Cilium biogenesis/degradation</keyword>
<keyword id="KW-0653">Protein transport</keyword>
<keyword id="KW-1185">Reference proteome</keyword>
<keyword id="KW-0677">Repeat</keyword>
<keyword id="KW-0802">TPR repeat</keyword>
<keyword id="KW-0813">Transport</keyword>
<keyword id="KW-0853">WD repeat</keyword>